<name>COBS_COREF</name>
<evidence type="ECO:0000255" key="1">
    <source>
        <dbReference type="HAMAP-Rule" id="MF_00719"/>
    </source>
</evidence>
<comment type="function">
    <text evidence="1">Joins adenosylcobinamide-GDP and alpha-ribazole to generate adenosylcobalamin (Ado-cobalamin). Also synthesizes adenosylcobalamin 5'-phosphate from adenosylcobinamide-GDP and alpha-ribazole 5'-phosphate.</text>
</comment>
<comment type="catalytic activity">
    <reaction evidence="1">
        <text>alpha-ribazole + adenosylcob(III)inamide-GDP = adenosylcob(III)alamin + GMP + H(+)</text>
        <dbReference type="Rhea" id="RHEA:16049"/>
        <dbReference type="ChEBI" id="CHEBI:10329"/>
        <dbReference type="ChEBI" id="CHEBI:15378"/>
        <dbReference type="ChEBI" id="CHEBI:18408"/>
        <dbReference type="ChEBI" id="CHEBI:58115"/>
        <dbReference type="ChEBI" id="CHEBI:60487"/>
        <dbReference type="EC" id="2.7.8.26"/>
    </reaction>
</comment>
<comment type="catalytic activity">
    <reaction evidence="1">
        <text>alpha-ribazole 5'-phosphate + adenosylcob(III)inamide-GDP = adenosylcob(III)alamin 5'-phosphate + GMP + H(+)</text>
        <dbReference type="Rhea" id="RHEA:23560"/>
        <dbReference type="ChEBI" id="CHEBI:15378"/>
        <dbReference type="ChEBI" id="CHEBI:57918"/>
        <dbReference type="ChEBI" id="CHEBI:58115"/>
        <dbReference type="ChEBI" id="CHEBI:60487"/>
        <dbReference type="ChEBI" id="CHEBI:60493"/>
        <dbReference type="EC" id="2.7.8.26"/>
    </reaction>
</comment>
<comment type="cofactor">
    <cofactor evidence="1">
        <name>Mg(2+)</name>
        <dbReference type="ChEBI" id="CHEBI:18420"/>
    </cofactor>
</comment>
<comment type="pathway">
    <text evidence="1">Cofactor biosynthesis; adenosylcobalamin biosynthesis; adenosylcobalamin from cob(II)yrinate a,c-diamide: step 7/7.</text>
</comment>
<comment type="subcellular location">
    <subcellularLocation>
        <location evidence="1">Cell membrane</location>
        <topology evidence="1">Multi-pass membrane protein</topology>
    </subcellularLocation>
</comment>
<comment type="similarity">
    <text evidence="1">Belongs to the CobS family.</text>
</comment>
<organism>
    <name type="scientific">Corynebacterium efficiens (strain DSM 44549 / YS-314 / AJ 12310 / JCM 11189 / NBRC 100395)</name>
    <dbReference type="NCBI Taxonomy" id="196164"/>
    <lineage>
        <taxon>Bacteria</taxon>
        <taxon>Bacillati</taxon>
        <taxon>Actinomycetota</taxon>
        <taxon>Actinomycetes</taxon>
        <taxon>Mycobacteriales</taxon>
        <taxon>Corynebacteriaceae</taxon>
        <taxon>Corynebacterium</taxon>
    </lineage>
</organism>
<feature type="chain" id="PRO_0000146873" description="Adenosylcobinamide-GDP ribazoletransferase">
    <location>
        <begin position="1"/>
        <end position="275"/>
    </location>
</feature>
<feature type="transmembrane region" description="Helical" evidence="1">
    <location>
        <begin position="52"/>
        <end position="72"/>
    </location>
</feature>
<feature type="transmembrane region" description="Helical" evidence="1">
    <location>
        <begin position="73"/>
        <end position="93"/>
    </location>
</feature>
<feature type="transmembrane region" description="Helical" evidence="1">
    <location>
        <begin position="126"/>
        <end position="146"/>
    </location>
</feature>
<feature type="transmembrane region" description="Helical" evidence="1">
    <location>
        <begin position="181"/>
        <end position="201"/>
    </location>
</feature>
<feature type="transmembrane region" description="Helical" evidence="1">
    <location>
        <begin position="208"/>
        <end position="228"/>
    </location>
</feature>
<feature type="transmembrane region" description="Helical" evidence="1">
    <location>
        <begin position="251"/>
        <end position="271"/>
    </location>
</feature>
<keyword id="KW-1003">Cell membrane</keyword>
<keyword id="KW-0169">Cobalamin biosynthesis</keyword>
<keyword id="KW-0460">Magnesium</keyword>
<keyword id="KW-0472">Membrane</keyword>
<keyword id="KW-1185">Reference proteome</keyword>
<keyword id="KW-0808">Transferase</keyword>
<keyword id="KW-0812">Transmembrane</keyword>
<keyword id="KW-1133">Transmembrane helix</keyword>
<accession>Q8FNQ1</accession>
<reference key="1">
    <citation type="journal article" date="2003" name="Genome Res.">
        <title>Comparative complete genome sequence analysis of the amino acid replacements responsible for the thermostability of Corynebacterium efficiens.</title>
        <authorList>
            <person name="Nishio Y."/>
            <person name="Nakamura Y."/>
            <person name="Kawarabayasi Y."/>
            <person name="Usuda Y."/>
            <person name="Kimura E."/>
            <person name="Sugimoto S."/>
            <person name="Matsui K."/>
            <person name="Yamagishi A."/>
            <person name="Kikuchi H."/>
            <person name="Ikeo K."/>
            <person name="Gojobori T."/>
        </authorList>
    </citation>
    <scope>NUCLEOTIDE SEQUENCE [LARGE SCALE GENOMIC DNA]</scope>
    <source>
        <strain>DSM 44549 / YS-314 / AJ 12310 / JCM 11189 / NBRC 100395</strain>
    </source>
</reference>
<gene>
    <name evidence="1" type="primary">cobS</name>
    <name type="ordered locus">CE2093</name>
</gene>
<sequence length="275" mass="27958">MSGKAHVTDGDHGPALTEGVTTALNWLSVLPIRGATTFDRITGARVMASLPVVGVVFGVLTAVLLGLLGVLGVTPLLTAVLVVIMWELLNRMMHLDGLADVADALGSYAAPERAREILADPHTGLMGFSAVLFSLLVQVTAVAALVEGKAGWLVCFIPALSRLGGQIMARVGRTPLSPTGFGAMVVGTVRLWWVAAWLVALGVTAGGVAVWAAGPAVVWIVPAAGIIACVVSESAGRHVSRRFGGVNGDCIGAGIHLSAAVVAVFCAVAVAGMTG</sequence>
<protein>
    <recommendedName>
        <fullName evidence="1">Adenosylcobinamide-GDP ribazoletransferase</fullName>
        <ecNumber evidence="1">2.7.8.26</ecNumber>
    </recommendedName>
    <alternativeName>
        <fullName evidence="1">Cobalamin synthase</fullName>
    </alternativeName>
    <alternativeName>
        <fullName evidence="1">Cobalamin-5'-phosphate synthase</fullName>
    </alternativeName>
</protein>
<dbReference type="EC" id="2.7.8.26" evidence="1"/>
<dbReference type="EMBL" id="BA000035">
    <property type="protein sequence ID" value="BAC18903.1"/>
    <property type="molecule type" value="Genomic_DNA"/>
</dbReference>
<dbReference type="RefSeq" id="WP_006768095.1">
    <property type="nucleotide sequence ID" value="NC_004369.1"/>
</dbReference>
<dbReference type="SMR" id="Q8FNQ1"/>
<dbReference type="STRING" id="196164.gene:10742521"/>
<dbReference type="KEGG" id="cef:CE2093"/>
<dbReference type="eggNOG" id="COG0368">
    <property type="taxonomic scope" value="Bacteria"/>
</dbReference>
<dbReference type="HOGENOM" id="CLU_057426_0_0_11"/>
<dbReference type="OrthoDB" id="9794223at2"/>
<dbReference type="UniPathway" id="UPA00148">
    <property type="reaction ID" value="UER00238"/>
</dbReference>
<dbReference type="Proteomes" id="UP000001409">
    <property type="component" value="Chromosome"/>
</dbReference>
<dbReference type="GO" id="GO:0005886">
    <property type="term" value="C:plasma membrane"/>
    <property type="evidence" value="ECO:0007669"/>
    <property type="project" value="UniProtKB-SubCell"/>
</dbReference>
<dbReference type="GO" id="GO:0051073">
    <property type="term" value="F:adenosylcobinamide-GDP ribazoletransferase activity"/>
    <property type="evidence" value="ECO:0007669"/>
    <property type="project" value="UniProtKB-UniRule"/>
</dbReference>
<dbReference type="GO" id="GO:0008818">
    <property type="term" value="F:cobalamin 5'-phosphate synthase activity"/>
    <property type="evidence" value="ECO:0007669"/>
    <property type="project" value="UniProtKB-UniRule"/>
</dbReference>
<dbReference type="GO" id="GO:0009236">
    <property type="term" value="P:cobalamin biosynthetic process"/>
    <property type="evidence" value="ECO:0007669"/>
    <property type="project" value="UniProtKB-UniRule"/>
</dbReference>
<dbReference type="HAMAP" id="MF_00719">
    <property type="entry name" value="CobS"/>
    <property type="match status" value="1"/>
</dbReference>
<dbReference type="InterPro" id="IPR003805">
    <property type="entry name" value="CobS"/>
</dbReference>
<dbReference type="NCBIfam" id="NF001282">
    <property type="entry name" value="PRK00235.2-4"/>
    <property type="match status" value="1"/>
</dbReference>
<dbReference type="PANTHER" id="PTHR34148">
    <property type="entry name" value="ADENOSYLCOBINAMIDE-GDP RIBAZOLETRANSFERASE"/>
    <property type="match status" value="1"/>
</dbReference>
<dbReference type="PANTHER" id="PTHR34148:SF1">
    <property type="entry name" value="ADENOSYLCOBINAMIDE-GDP RIBAZOLETRANSFERASE"/>
    <property type="match status" value="1"/>
</dbReference>
<dbReference type="Pfam" id="PF02654">
    <property type="entry name" value="CobS"/>
    <property type="match status" value="1"/>
</dbReference>
<proteinExistence type="inferred from homology"/>